<comment type="function">
    <text evidence="1">Part of the ABC transporter complex ModABC involved in molybdenum import. Responsible for energy coupling to the transport system.</text>
</comment>
<comment type="catalytic activity">
    <reaction evidence="1">
        <text>molybdate(out) + ATP + H2O = molybdate(in) + ADP + phosphate + H(+)</text>
        <dbReference type="Rhea" id="RHEA:22020"/>
        <dbReference type="ChEBI" id="CHEBI:15377"/>
        <dbReference type="ChEBI" id="CHEBI:15378"/>
        <dbReference type="ChEBI" id="CHEBI:30616"/>
        <dbReference type="ChEBI" id="CHEBI:36264"/>
        <dbReference type="ChEBI" id="CHEBI:43474"/>
        <dbReference type="ChEBI" id="CHEBI:456216"/>
        <dbReference type="EC" id="7.3.2.5"/>
    </reaction>
</comment>
<comment type="subunit">
    <text evidence="1">The complex is composed of two ATP-binding proteins (ModC), two transmembrane proteins (ModB) and a solute-binding protein (ModA).</text>
</comment>
<comment type="subcellular location">
    <subcellularLocation>
        <location evidence="1">Cell inner membrane</location>
        <topology evidence="1">Peripheral membrane protein</topology>
    </subcellularLocation>
</comment>
<comment type="similarity">
    <text evidence="1">Belongs to the ABC transporter superfamily. Molybdate importer (TC 3.A.1.8) family.</text>
</comment>
<reference key="1">
    <citation type="journal article" date="2003" name="Nat. Genet.">
        <title>Comparative analysis of the genome sequences of Bordetella pertussis, Bordetella parapertussis and Bordetella bronchiseptica.</title>
        <authorList>
            <person name="Parkhill J."/>
            <person name="Sebaihia M."/>
            <person name="Preston A."/>
            <person name="Murphy L.D."/>
            <person name="Thomson N.R."/>
            <person name="Harris D.E."/>
            <person name="Holden M.T.G."/>
            <person name="Churcher C.M."/>
            <person name="Bentley S.D."/>
            <person name="Mungall K.L."/>
            <person name="Cerdeno-Tarraga A.-M."/>
            <person name="Temple L."/>
            <person name="James K.D."/>
            <person name="Harris B."/>
            <person name="Quail M.A."/>
            <person name="Achtman M."/>
            <person name="Atkin R."/>
            <person name="Baker S."/>
            <person name="Basham D."/>
            <person name="Bason N."/>
            <person name="Cherevach I."/>
            <person name="Chillingworth T."/>
            <person name="Collins M."/>
            <person name="Cronin A."/>
            <person name="Davis P."/>
            <person name="Doggett J."/>
            <person name="Feltwell T."/>
            <person name="Goble A."/>
            <person name="Hamlin N."/>
            <person name="Hauser H."/>
            <person name="Holroyd S."/>
            <person name="Jagels K."/>
            <person name="Leather S."/>
            <person name="Moule S."/>
            <person name="Norberczak H."/>
            <person name="O'Neil S."/>
            <person name="Ormond D."/>
            <person name="Price C."/>
            <person name="Rabbinowitsch E."/>
            <person name="Rutter S."/>
            <person name="Sanders M."/>
            <person name="Saunders D."/>
            <person name="Seeger K."/>
            <person name="Sharp S."/>
            <person name="Simmonds M."/>
            <person name="Skelton J."/>
            <person name="Squares R."/>
            <person name="Squares S."/>
            <person name="Stevens K."/>
            <person name="Unwin L."/>
            <person name="Whitehead S."/>
            <person name="Barrell B.G."/>
            <person name="Maskell D.J."/>
        </authorList>
    </citation>
    <scope>NUCLEOTIDE SEQUENCE [LARGE SCALE GENOMIC DNA]</scope>
    <source>
        <strain>ATCC BAA-588 / NCTC 13252 / RB50</strain>
    </source>
</reference>
<name>MODC_BORBR</name>
<sequence>MPSDFPPGQAGIHARFRVDYPEFSLDVDLRLPGRGVTALFGQSGSGKTTCLRCMAGLAPVSDGYLDINGEVWLDSAARRAVPTHKRALGYVFQEASLFEHLDVLANLRYGMKRVPPALRRVDLEQATGLLGIGHLLARMPAGLSGGERQRVGIARALLTSPRLLLMDEPLAALDVQRKREILPYLERLHDELDIPVIYVSHSPDEVARLADHLVLLEQGRAVASGPLDALLTRLDLPMAMTDDASVVVTGEAAGFDPGYALLTLQLPGGRARLRFVHQAAPAGQRLRVVVHARDVSLALQQPREGSILNVLAVRVLEMAPAANPAHVMVRLDADGTPLLARITRYSRDRLALAPGMQAWAQIKAVSLLA</sequence>
<accession>Q7WP62</accession>
<proteinExistence type="inferred from homology"/>
<keyword id="KW-0067">ATP-binding</keyword>
<keyword id="KW-0997">Cell inner membrane</keyword>
<keyword id="KW-1003">Cell membrane</keyword>
<keyword id="KW-0472">Membrane</keyword>
<keyword id="KW-0500">Molybdenum</keyword>
<keyword id="KW-0547">Nucleotide-binding</keyword>
<keyword id="KW-1278">Translocase</keyword>
<keyword id="KW-0813">Transport</keyword>
<gene>
    <name evidence="1" type="primary">modC</name>
    <name type="ordered locus">BB0823</name>
</gene>
<feature type="chain" id="PRO_0000092530" description="Molybdenum import ATP-binding protein ModC">
    <location>
        <begin position="1"/>
        <end position="369"/>
    </location>
</feature>
<feature type="domain" description="ABC transporter" evidence="1">
    <location>
        <begin position="7"/>
        <end position="243"/>
    </location>
</feature>
<feature type="domain" description="Mop" evidence="2">
    <location>
        <begin position="304"/>
        <end position="369"/>
    </location>
</feature>
<feature type="binding site" evidence="1">
    <location>
        <begin position="41"/>
        <end position="48"/>
    </location>
    <ligand>
        <name>ATP</name>
        <dbReference type="ChEBI" id="CHEBI:30616"/>
    </ligand>
</feature>
<organism>
    <name type="scientific">Bordetella bronchiseptica (strain ATCC BAA-588 / NCTC 13252 / RB50)</name>
    <name type="common">Alcaligenes bronchisepticus</name>
    <dbReference type="NCBI Taxonomy" id="257310"/>
    <lineage>
        <taxon>Bacteria</taxon>
        <taxon>Pseudomonadati</taxon>
        <taxon>Pseudomonadota</taxon>
        <taxon>Betaproteobacteria</taxon>
        <taxon>Burkholderiales</taxon>
        <taxon>Alcaligenaceae</taxon>
        <taxon>Bordetella</taxon>
    </lineage>
</organism>
<dbReference type="EC" id="7.3.2.5" evidence="1"/>
<dbReference type="EMBL" id="BX640439">
    <property type="protein sequence ID" value="CAE31322.1"/>
    <property type="molecule type" value="Genomic_DNA"/>
</dbReference>
<dbReference type="RefSeq" id="WP_010925958.1">
    <property type="nucleotide sequence ID" value="NC_002927.3"/>
</dbReference>
<dbReference type="SMR" id="Q7WP62"/>
<dbReference type="GeneID" id="93202488"/>
<dbReference type="KEGG" id="bbr:BB0823"/>
<dbReference type="eggNOG" id="COG4148">
    <property type="taxonomic scope" value="Bacteria"/>
</dbReference>
<dbReference type="HOGENOM" id="CLU_000604_1_1_4"/>
<dbReference type="Proteomes" id="UP000001027">
    <property type="component" value="Chromosome"/>
</dbReference>
<dbReference type="GO" id="GO:0005886">
    <property type="term" value="C:plasma membrane"/>
    <property type="evidence" value="ECO:0007669"/>
    <property type="project" value="UniProtKB-SubCell"/>
</dbReference>
<dbReference type="GO" id="GO:0015412">
    <property type="term" value="F:ABC-type molybdate transporter activity"/>
    <property type="evidence" value="ECO:0007669"/>
    <property type="project" value="UniProtKB-EC"/>
</dbReference>
<dbReference type="GO" id="GO:0005524">
    <property type="term" value="F:ATP binding"/>
    <property type="evidence" value="ECO:0007669"/>
    <property type="project" value="UniProtKB-KW"/>
</dbReference>
<dbReference type="GO" id="GO:0016887">
    <property type="term" value="F:ATP hydrolysis activity"/>
    <property type="evidence" value="ECO:0007669"/>
    <property type="project" value="InterPro"/>
</dbReference>
<dbReference type="Gene3D" id="2.40.50.100">
    <property type="match status" value="1"/>
</dbReference>
<dbReference type="Gene3D" id="3.40.50.300">
    <property type="entry name" value="P-loop containing nucleotide triphosphate hydrolases"/>
    <property type="match status" value="1"/>
</dbReference>
<dbReference type="InterPro" id="IPR003593">
    <property type="entry name" value="AAA+_ATPase"/>
</dbReference>
<dbReference type="InterPro" id="IPR003439">
    <property type="entry name" value="ABC_transporter-like_ATP-bd"/>
</dbReference>
<dbReference type="InterPro" id="IPR017871">
    <property type="entry name" value="ABC_transporter-like_CS"/>
</dbReference>
<dbReference type="InterPro" id="IPR008995">
    <property type="entry name" value="Mo/tungstate-bd_C_term_dom"/>
</dbReference>
<dbReference type="InterPro" id="IPR011868">
    <property type="entry name" value="ModC_ABC_ATP-bd"/>
</dbReference>
<dbReference type="InterPro" id="IPR050334">
    <property type="entry name" value="Molybdenum_import_ModC"/>
</dbReference>
<dbReference type="InterPro" id="IPR004606">
    <property type="entry name" value="Mop_domain"/>
</dbReference>
<dbReference type="InterPro" id="IPR027417">
    <property type="entry name" value="P-loop_NTPase"/>
</dbReference>
<dbReference type="InterPro" id="IPR005116">
    <property type="entry name" value="Transp-assoc_OB_typ1"/>
</dbReference>
<dbReference type="NCBIfam" id="TIGR02142">
    <property type="entry name" value="modC_ABC"/>
    <property type="match status" value="1"/>
</dbReference>
<dbReference type="PANTHER" id="PTHR43514">
    <property type="entry name" value="ABC TRANSPORTER I FAMILY MEMBER 10"/>
    <property type="match status" value="1"/>
</dbReference>
<dbReference type="PANTHER" id="PTHR43514:SF10">
    <property type="entry name" value="MOLYBDENUM IMPORT ATP-BINDING PROTEIN MODC 2"/>
    <property type="match status" value="1"/>
</dbReference>
<dbReference type="Pfam" id="PF00005">
    <property type="entry name" value="ABC_tran"/>
    <property type="match status" value="1"/>
</dbReference>
<dbReference type="Pfam" id="PF03459">
    <property type="entry name" value="TOBE"/>
    <property type="match status" value="1"/>
</dbReference>
<dbReference type="SMART" id="SM00382">
    <property type="entry name" value="AAA"/>
    <property type="match status" value="1"/>
</dbReference>
<dbReference type="SUPFAM" id="SSF50331">
    <property type="entry name" value="MOP-like"/>
    <property type="match status" value="1"/>
</dbReference>
<dbReference type="SUPFAM" id="SSF52540">
    <property type="entry name" value="P-loop containing nucleoside triphosphate hydrolases"/>
    <property type="match status" value="1"/>
</dbReference>
<dbReference type="PROSITE" id="PS00211">
    <property type="entry name" value="ABC_TRANSPORTER_1"/>
    <property type="match status" value="1"/>
</dbReference>
<dbReference type="PROSITE" id="PS50893">
    <property type="entry name" value="ABC_TRANSPORTER_2"/>
    <property type="match status" value="1"/>
</dbReference>
<dbReference type="PROSITE" id="PS51241">
    <property type="entry name" value="MODC"/>
    <property type="match status" value="1"/>
</dbReference>
<dbReference type="PROSITE" id="PS51866">
    <property type="entry name" value="MOP"/>
    <property type="match status" value="1"/>
</dbReference>
<protein>
    <recommendedName>
        <fullName evidence="1">Molybdenum import ATP-binding protein ModC</fullName>
        <ecNumber evidence="1">7.3.2.5</ecNumber>
    </recommendedName>
</protein>
<evidence type="ECO:0000255" key="1">
    <source>
        <dbReference type="HAMAP-Rule" id="MF_01705"/>
    </source>
</evidence>
<evidence type="ECO:0000255" key="2">
    <source>
        <dbReference type="PROSITE-ProRule" id="PRU01213"/>
    </source>
</evidence>